<comment type="function">
    <text evidence="1">S-adenosyl-L-methionine-dependent methyltransferase that catalyzes the trimethylation of the amino group of the modified target histidine residue in translation elongation factor 2 (EF-2), to form an intermediate called diphthine. The three successive methylation reactions represent the second step of diphthamide biosynthesis.</text>
</comment>
<comment type="catalytic activity">
    <reaction evidence="1">
        <text>2-[(3S)-amino-3-carboxypropyl]-L-histidyl-[translation elongation factor 2] + 3 S-adenosyl-L-methionine = diphthine-[translation elongation factor 2] + 3 S-adenosyl-L-homocysteine + 3 H(+)</text>
        <dbReference type="Rhea" id="RHEA:36415"/>
        <dbReference type="Rhea" id="RHEA-COMP:9749"/>
        <dbReference type="Rhea" id="RHEA-COMP:10172"/>
        <dbReference type="ChEBI" id="CHEBI:15378"/>
        <dbReference type="ChEBI" id="CHEBI:57856"/>
        <dbReference type="ChEBI" id="CHEBI:59789"/>
        <dbReference type="ChEBI" id="CHEBI:73995"/>
        <dbReference type="ChEBI" id="CHEBI:82696"/>
        <dbReference type="EC" id="2.1.1.98"/>
    </reaction>
</comment>
<comment type="pathway">
    <text evidence="1">Protein modification; peptidyl-diphthamide biosynthesis.</text>
</comment>
<comment type="subunit">
    <text evidence="1">Homodimer.</text>
</comment>
<comment type="similarity">
    <text evidence="1">Belongs to the diphthine synthase family.</text>
</comment>
<name>DPHB_SACI4</name>
<gene>
    <name evidence="1" type="primary">dphB</name>
    <name type="ordered locus">M1425_1273</name>
</gene>
<protein>
    <recommendedName>
        <fullName evidence="1">Diphthine synthase</fullName>
        <ecNumber evidence="1">2.1.1.98</ecNumber>
    </recommendedName>
    <alternativeName>
        <fullName evidence="1">Diphthamide biosynthesis methyltransferase</fullName>
    </alternativeName>
</protein>
<organism>
    <name type="scientific">Saccharolobus islandicus (strain M.14.25 / Kamchatka #1)</name>
    <name type="common">Sulfolobus islandicus</name>
    <dbReference type="NCBI Taxonomy" id="427317"/>
    <lineage>
        <taxon>Archaea</taxon>
        <taxon>Thermoproteota</taxon>
        <taxon>Thermoprotei</taxon>
        <taxon>Sulfolobales</taxon>
        <taxon>Sulfolobaceae</taxon>
        <taxon>Saccharolobus</taxon>
    </lineage>
</organism>
<evidence type="ECO:0000255" key="1">
    <source>
        <dbReference type="HAMAP-Rule" id="MF_01084"/>
    </source>
</evidence>
<accession>C3MYP9</accession>
<keyword id="KW-0489">Methyltransferase</keyword>
<keyword id="KW-0949">S-adenosyl-L-methionine</keyword>
<keyword id="KW-0808">Transferase</keyword>
<feature type="chain" id="PRO_1000213523" description="Diphthine synthase">
    <location>
        <begin position="1"/>
        <end position="257"/>
    </location>
</feature>
<feature type="binding site" evidence="1">
    <location>
        <position position="11"/>
    </location>
    <ligand>
        <name>S-adenosyl-L-methionine</name>
        <dbReference type="ChEBI" id="CHEBI:59789"/>
    </ligand>
</feature>
<feature type="binding site" evidence="1">
    <location>
        <position position="89"/>
    </location>
    <ligand>
        <name>S-adenosyl-L-methionine</name>
        <dbReference type="ChEBI" id="CHEBI:59789"/>
    </ligand>
</feature>
<feature type="binding site" evidence="1">
    <location>
        <position position="92"/>
    </location>
    <ligand>
        <name>S-adenosyl-L-methionine</name>
        <dbReference type="ChEBI" id="CHEBI:59789"/>
    </ligand>
</feature>
<feature type="binding site" evidence="1">
    <location>
        <begin position="117"/>
        <end position="118"/>
    </location>
    <ligand>
        <name>S-adenosyl-L-methionine</name>
        <dbReference type="ChEBI" id="CHEBI:59789"/>
    </ligand>
</feature>
<feature type="binding site" evidence="1">
    <location>
        <position position="169"/>
    </location>
    <ligand>
        <name>S-adenosyl-L-methionine</name>
        <dbReference type="ChEBI" id="CHEBI:59789"/>
    </ligand>
</feature>
<feature type="binding site" evidence="1">
    <location>
        <position position="210"/>
    </location>
    <ligand>
        <name>S-adenosyl-L-methionine</name>
        <dbReference type="ChEBI" id="CHEBI:59789"/>
    </ligand>
</feature>
<feature type="binding site" evidence="1">
    <location>
        <position position="235"/>
    </location>
    <ligand>
        <name>S-adenosyl-L-methionine</name>
        <dbReference type="ChEBI" id="CHEBI:59789"/>
    </ligand>
</feature>
<proteinExistence type="inferred from homology"/>
<dbReference type="EC" id="2.1.1.98" evidence="1"/>
<dbReference type="EMBL" id="CP001400">
    <property type="protein sequence ID" value="ACP38028.1"/>
    <property type="molecule type" value="Genomic_DNA"/>
</dbReference>
<dbReference type="SMR" id="C3MYP9"/>
<dbReference type="KEGG" id="sia:M1425_1273"/>
<dbReference type="HOGENOM" id="CLU_066040_0_0_2"/>
<dbReference type="UniPathway" id="UPA00559"/>
<dbReference type="Proteomes" id="UP000001350">
    <property type="component" value="Chromosome"/>
</dbReference>
<dbReference type="GO" id="GO:0004164">
    <property type="term" value="F:diphthine synthase activity"/>
    <property type="evidence" value="ECO:0007669"/>
    <property type="project" value="UniProtKB-UniRule"/>
</dbReference>
<dbReference type="GO" id="GO:0032259">
    <property type="term" value="P:methylation"/>
    <property type="evidence" value="ECO:0007669"/>
    <property type="project" value="UniProtKB-KW"/>
</dbReference>
<dbReference type="GO" id="GO:0017183">
    <property type="term" value="P:protein histidyl modification to diphthamide"/>
    <property type="evidence" value="ECO:0007669"/>
    <property type="project" value="UniProtKB-UniRule"/>
</dbReference>
<dbReference type="CDD" id="cd11647">
    <property type="entry name" value="DHP5_DphB"/>
    <property type="match status" value="1"/>
</dbReference>
<dbReference type="Gene3D" id="3.40.1010.10">
    <property type="entry name" value="Cobalt-precorrin-4 Transmethylase, Domain 1"/>
    <property type="match status" value="1"/>
</dbReference>
<dbReference type="Gene3D" id="3.30.950.10">
    <property type="entry name" value="Methyltransferase, Cobalt-precorrin-4 Transmethylase, Domain 2"/>
    <property type="match status" value="1"/>
</dbReference>
<dbReference type="HAMAP" id="MF_01084">
    <property type="entry name" value="Diphthine_synth"/>
    <property type="match status" value="1"/>
</dbReference>
<dbReference type="InterPro" id="IPR000878">
    <property type="entry name" value="4pyrrol_Mease"/>
</dbReference>
<dbReference type="InterPro" id="IPR035996">
    <property type="entry name" value="4pyrrol_Methylase_sf"/>
</dbReference>
<dbReference type="InterPro" id="IPR014777">
    <property type="entry name" value="4pyrrole_Mease_sub1"/>
</dbReference>
<dbReference type="InterPro" id="IPR014776">
    <property type="entry name" value="4pyrrole_Mease_sub2"/>
</dbReference>
<dbReference type="InterPro" id="IPR004551">
    <property type="entry name" value="Dphthn_synthase"/>
</dbReference>
<dbReference type="NCBIfam" id="TIGR00522">
    <property type="entry name" value="dph5"/>
    <property type="match status" value="1"/>
</dbReference>
<dbReference type="PANTHER" id="PTHR10882:SF0">
    <property type="entry name" value="DIPHTHINE METHYL ESTER SYNTHASE"/>
    <property type="match status" value="1"/>
</dbReference>
<dbReference type="PANTHER" id="PTHR10882">
    <property type="entry name" value="DIPHTHINE SYNTHASE"/>
    <property type="match status" value="1"/>
</dbReference>
<dbReference type="Pfam" id="PF00590">
    <property type="entry name" value="TP_methylase"/>
    <property type="match status" value="1"/>
</dbReference>
<dbReference type="PIRSF" id="PIRSF036432">
    <property type="entry name" value="Diphthine_synth"/>
    <property type="match status" value="1"/>
</dbReference>
<dbReference type="SUPFAM" id="SSF53790">
    <property type="entry name" value="Tetrapyrrole methylase"/>
    <property type="match status" value="1"/>
</dbReference>
<reference key="1">
    <citation type="journal article" date="2009" name="Proc. Natl. Acad. Sci. U.S.A.">
        <title>Biogeography of the Sulfolobus islandicus pan-genome.</title>
        <authorList>
            <person name="Reno M.L."/>
            <person name="Held N.L."/>
            <person name="Fields C.J."/>
            <person name="Burke P.V."/>
            <person name="Whitaker R.J."/>
        </authorList>
    </citation>
    <scope>NUCLEOTIDE SEQUENCE [LARGE SCALE GENOMIC DNA]</scope>
    <source>
        <strain>M.14.25 / Kamchatka #1</strain>
    </source>
</reference>
<sequence>MSILSLVGLGISKKFITENAIDTLNNSDIIIFDKYTSRSCDINVDVLRRLVKGGKTLIEADRSLLENNSKIIMDYLDKNYNVSIASIGDVLIATTHVSLLIEAKQRGHNVKVIPGISVHCYLISKSLLSSYKFGKSVTVTFPYNDFIDPTPYNVIKDNKERGLHTILYLDLKSEKAMTANEALQILLRLEDKHRKNVLSKSDIVIVGARLGCDDEKIVALTVEEATLYDFGNTPHIIIIPGNLHYMEADAIKWMLMS</sequence>